<reference key="1">
    <citation type="journal article" date="2002" name="Genome Res.">
        <title>The genome of Methanosarcina acetivorans reveals extensive metabolic and physiological diversity.</title>
        <authorList>
            <person name="Galagan J.E."/>
            <person name="Nusbaum C."/>
            <person name="Roy A."/>
            <person name="Endrizzi M.G."/>
            <person name="Macdonald P."/>
            <person name="FitzHugh W."/>
            <person name="Calvo S."/>
            <person name="Engels R."/>
            <person name="Smirnov S."/>
            <person name="Atnoor D."/>
            <person name="Brown A."/>
            <person name="Allen N."/>
            <person name="Naylor J."/>
            <person name="Stange-Thomann N."/>
            <person name="DeArellano K."/>
            <person name="Johnson R."/>
            <person name="Linton L."/>
            <person name="McEwan P."/>
            <person name="McKernan K."/>
            <person name="Talamas J."/>
            <person name="Tirrell A."/>
            <person name="Ye W."/>
            <person name="Zimmer A."/>
            <person name="Barber R.D."/>
            <person name="Cann I."/>
            <person name="Graham D.E."/>
            <person name="Grahame D.A."/>
            <person name="Guss A.M."/>
            <person name="Hedderich R."/>
            <person name="Ingram-Smith C."/>
            <person name="Kuettner H.C."/>
            <person name="Krzycki J.A."/>
            <person name="Leigh J.A."/>
            <person name="Li W."/>
            <person name="Liu J."/>
            <person name="Mukhopadhyay B."/>
            <person name="Reeve J.N."/>
            <person name="Smith K."/>
            <person name="Springer T.A."/>
            <person name="Umayam L.A."/>
            <person name="White O."/>
            <person name="White R.H."/>
            <person name="de Macario E.C."/>
            <person name="Ferry J.G."/>
            <person name="Jarrell K.F."/>
            <person name="Jing H."/>
            <person name="Macario A.J.L."/>
            <person name="Paulsen I.T."/>
            <person name="Pritchett M."/>
            <person name="Sowers K.R."/>
            <person name="Swanson R.V."/>
            <person name="Zinder S.H."/>
            <person name="Lander E."/>
            <person name="Metcalf W.W."/>
            <person name="Birren B."/>
        </authorList>
    </citation>
    <scope>NUCLEOTIDE SEQUENCE [LARGE SCALE GENOMIC DNA]</scope>
    <source>
        <strain>ATCC 35395 / DSM 2834 / JCM 12185 / C2A</strain>
    </source>
</reference>
<reference key="2">
    <citation type="journal article" date="2004" name="Appl. Environ. Microbiol.">
        <title>Development of a markerless genetic exchange method for Methanosarcina acetivorans C2A and its use in construction of new genetic tools for methanogenic archaea.</title>
        <authorList>
            <person name="Pritchett M.A."/>
            <person name="Zhang J.K."/>
            <person name="Metcalf W.W."/>
        </authorList>
    </citation>
    <scope>BIOTECHNOLOGY</scope>
    <scope>DISRUPTION PHENOTYPE</scope>
    <source>
        <strain>ATCC 35395 / DSM 2834 / JCM 12185 / C2A</strain>
    </source>
</reference>
<gene>
    <name type="primary">hpt</name>
    <name type="ordered locus">MA_0717</name>
</gene>
<comment type="function">
    <text evidence="1">Catalyzes a salvage reaction resulting in the formation of IMP that is energically less costly than de novo synthesis.</text>
</comment>
<comment type="catalytic activity">
    <reaction>
        <text>IMP + diphosphate = hypoxanthine + 5-phospho-alpha-D-ribose 1-diphosphate</text>
        <dbReference type="Rhea" id="RHEA:17973"/>
        <dbReference type="ChEBI" id="CHEBI:17368"/>
        <dbReference type="ChEBI" id="CHEBI:33019"/>
        <dbReference type="ChEBI" id="CHEBI:58017"/>
        <dbReference type="ChEBI" id="CHEBI:58053"/>
        <dbReference type="EC" id="2.4.2.8"/>
    </reaction>
</comment>
<comment type="catalytic activity">
    <reaction>
        <text>GMP + diphosphate = guanine + 5-phospho-alpha-D-ribose 1-diphosphate</text>
        <dbReference type="Rhea" id="RHEA:25424"/>
        <dbReference type="ChEBI" id="CHEBI:16235"/>
        <dbReference type="ChEBI" id="CHEBI:33019"/>
        <dbReference type="ChEBI" id="CHEBI:58017"/>
        <dbReference type="ChEBI" id="CHEBI:58115"/>
        <dbReference type="EC" id="2.4.2.8"/>
    </reaction>
</comment>
<comment type="pathway">
    <text>Purine metabolism; IMP biosynthesis via salvage pathway; IMP from hypoxanthine: step 1/1.</text>
</comment>
<comment type="subunit">
    <text evidence="1">Homodimer.</text>
</comment>
<comment type="subcellular location">
    <subcellularLocation>
        <location evidence="1">Cytoplasm</location>
    </subcellularLocation>
</comment>
<comment type="disruption phenotype">
    <text evidence="2">Cells have increased resistant to purine analogs 8-aza-2,6-diaminopurine (8-ADP) and 2-methylpurine (2MP). No change in growth rate in HS (minimal) broth.</text>
</comment>
<comment type="biotechnology">
    <text evidence="2">Used for negative selection when transforming this organism.</text>
</comment>
<comment type="similarity">
    <text evidence="3">Belongs to the purine/pyrimidine phosphoribosyltransferase family. Archaeal HPRT subfamily.</text>
</comment>
<accession>Q8TSS8</accession>
<dbReference type="EC" id="2.4.2.8"/>
<dbReference type="EMBL" id="AE010299">
    <property type="protein sequence ID" value="AAM04157.1"/>
    <property type="molecule type" value="Genomic_DNA"/>
</dbReference>
<dbReference type="RefSeq" id="WP_011020762.1">
    <property type="nucleotide sequence ID" value="NC_003552.1"/>
</dbReference>
<dbReference type="SMR" id="Q8TSS8"/>
<dbReference type="FunCoup" id="Q8TSS8">
    <property type="interactions" value="46"/>
</dbReference>
<dbReference type="STRING" id="188937.MA_0717"/>
<dbReference type="EnsemblBacteria" id="AAM04157">
    <property type="protein sequence ID" value="AAM04157"/>
    <property type="gene ID" value="MA_0717"/>
</dbReference>
<dbReference type="GeneID" id="1472609"/>
<dbReference type="KEGG" id="mac:MA_0717"/>
<dbReference type="HOGENOM" id="CLU_126376_0_0_2"/>
<dbReference type="InParanoid" id="Q8TSS8"/>
<dbReference type="OrthoDB" id="8323at2157"/>
<dbReference type="PhylomeDB" id="Q8TSS8"/>
<dbReference type="UniPathway" id="UPA00591">
    <property type="reaction ID" value="UER00648"/>
</dbReference>
<dbReference type="Proteomes" id="UP000002487">
    <property type="component" value="Chromosome"/>
</dbReference>
<dbReference type="GO" id="GO:0005737">
    <property type="term" value="C:cytoplasm"/>
    <property type="evidence" value="ECO:0007669"/>
    <property type="project" value="UniProtKB-SubCell"/>
</dbReference>
<dbReference type="GO" id="GO:0052657">
    <property type="term" value="F:guanine phosphoribosyltransferase activity"/>
    <property type="evidence" value="ECO:0007669"/>
    <property type="project" value="RHEA"/>
</dbReference>
<dbReference type="GO" id="GO:0004422">
    <property type="term" value="F:hypoxanthine phosphoribosyltransferase activity"/>
    <property type="evidence" value="ECO:0007669"/>
    <property type="project" value="UniProtKB-UniRule"/>
</dbReference>
<dbReference type="GO" id="GO:0032264">
    <property type="term" value="P:IMP salvage"/>
    <property type="evidence" value="ECO:0007669"/>
    <property type="project" value="UniProtKB-UniRule"/>
</dbReference>
<dbReference type="GO" id="GO:0006166">
    <property type="term" value="P:purine ribonucleoside salvage"/>
    <property type="evidence" value="ECO:0007669"/>
    <property type="project" value="UniProtKB-KW"/>
</dbReference>
<dbReference type="CDD" id="cd06223">
    <property type="entry name" value="PRTases_typeI"/>
    <property type="match status" value="1"/>
</dbReference>
<dbReference type="Gene3D" id="3.40.50.2020">
    <property type="match status" value="1"/>
</dbReference>
<dbReference type="HAMAP" id="MF_01467">
    <property type="entry name" value="Hypx_phosphoribosyltr"/>
    <property type="match status" value="1"/>
</dbReference>
<dbReference type="InterPro" id="IPR026597">
    <property type="entry name" value="HGPRTase-like"/>
</dbReference>
<dbReference type="InterPro" id="IPR000836">
    <property type="entry name" value="PRibTrfase_dom"/>
</dbReference>
<dbReference type="InterPro" id="IPR029057">
    <property type="entry name" value="PRTase-like"/>
</dbReference>
<dbReference type="InterPro" id="IPR050118">
    <property type="entry name" value="Pur/Pyrimidine_PRTase"/>
</dbReference>
<dbReference type="NCBIfam" id="NF040646">
    <property type="entry name" value="HPT_Archaea"/>
    <property type="match status" value="1"/>
</dbReference>
<dbReference type="NCBIfam" id="NF002635">
    <property type="entry name" value="PRK02304.1-4"/>
    <property type="match status" value="1"/>
</dbReference>
<dbReference type="PANTHER" id="PTHR43864">
    <property type="entry name" value="HYPOXANTHINE/GUANINE PHOSPHORIBOSYLTRANSFERASE"/>
    <property type="match status" value="1"/>
</dbReference>
<dbReference type="PANTHER" id="PTHR43864:SF1">
    <property type="entry name" value="XANTHINE PHOSPHORIBOSYLTRANSFERASE"/>
    <property type="match status" value="1"/>
</dbReference>
<dbReference type="Pfam" id="PF00156">
    <property type="entry name" value="Pribosyltran"/>
    <property type="match status" value="1"/>
</dbReference>
<dbReference type="SUPFAM" id="SSF53271">
    <property type="entry name" value="PRTase-like"/>
    <property type="match status" value="1"/>
</dbReference>
<dbReference type="PROSITE" id="PS00103">
    <property type="entry name" value="PUR_PYR_PR_TRANSFER"/>
    <property type="match status" value="1"/>
</dbReference>
<protein>
    <recommendedName>
        <fullName>Hypoxanthine/guanine phosphoribosyltransferase</fullName>
        <shortName>HGPRTase</shortName>
        <ecNumber>2.4.2.8</ecNumber>
    </recommendedName>
</protein>
<keyword id="KW-0963">Cytoplasm</keyword>
<keyword id="KW-0328">Glycosyltransferase</keyword>
<keyword id="KW-0660">Purine salvage</keyword>
<keyword id="KW-1185">Reference proteome</keyword>
<keyword id="KW-0808">Transferase</keyword>
<evidence type="ECO:0000250" key="1"/>
<evidence type="ECO:0000269" key="2">
    <source>
    </source>
</evidence>
<evidence type="ECO:0000305" key="3"/>
<name>HPRT_METAC</name>
<organism>
    <name type="scientific">Methanosarcina acetivorans (strain ATCC 35395 / DSM 2834 / JCM 12185 / C2A)</name>
    <dbReference type="NCBI Taxonomy" id="188937"/>
    <lineage>
        <taxon>Archaea</taxon>
        <taxon>Methanobacteriati</taxon>
        <taxon>Methanobacteriota</taxon>
        <taxon>Stenosarchaea group</taxon>
        <taxon>Methanomicrobia</taxon>
        <taxon>Methanosarcinales</taxon>
        <taxon>Methanosarcinaceae</taxon>
        <taxon>Methanosarcina</taxon>
    </lineage>
</organism>
<feature type="chain" id="PRO_0000415480" description="Hypoxanthine/guanine phosphoribosyltransferase">
    <location>
        <begin position="1"/>
        <end position="189"/>
    </location>
</feature>
<sequence length="189" mass="20673">MLERLKDSLVNSPVIKRGEYNYFIHPISDGVPSIDPRLIEEIANYIIRIADMDVDTILTIEAMGIPVANALSLKTGIPLTIVRKRPYFLEGEVELSQSTGYSKGVLYINGLKKGDRVVIVDDVISTGGTLLALVKALQNMGVEITDVISVIGRGAGYFKLRELGVEPKILVTIDVSEKGVEIQDVFGDQ</sequence>
<proteinExistence type="evidence at protein level"/>